<proteinExistence type="inferred from homology"/>
<name>DARP_YERPE</name>
<protein>
    <recommendedName>
        <fullName evidence="1">Dual-action ribosomal maturation protein DarP</fullName>
    </recommendedName>
    <alternativeName>
        <fullName evidence="1">Large ribosomal subunit assembly factor DarP</fullName>
    </alternativeName>
</protein>
<sequence length="182" mass="21156">MNKQPEDWLDDVPENKNDDDDEIIWVSKSEIKRDAEALKDLGTELVDLGKNALERIPLDEDLLAAIELAQKIKKEGRRRQLQLIGKMLRARDVEPIQTALDKLKNRHNQQISLFHKLETLRDRLIAEGDEAIPTVLELYPDADRQQLRSLVRNAQKEQAANKPPKSFRQIFSYLRELAEKKQ</sequence>
<accession>Q8ZAU5</accession>
<accession>Q0WAW5</accession>
<accession>Q8D1Q2</accession>
<organism>
    <name type="scientific">Yersinia pestis</name>
    <dbReference type="NCBI Taxonomy" id="632"/>
    <lineage>
        <taxon>Bacteria</taxon>
        <taxon>Pseudomonadati</taxon>
        <taxon>Pseudomonadota</taxon>
        <taxon>Gammaproteobacteria</taxon>
        <taxon>Enterobacterales</taxon>
        <taxon>Yersiniaceae</taxon>
        <taxon>Yersinia</taxon>
    </lineage>
</organism>
<comment type="function">
    <text evidence="1">Member of a network of 50S ribosomal subunit biogenesis factors which assembles along the 30S-50S interface, preventing incorrect 23S rRNA structures from forming. Promotes peptidyl transferase center (PTC) maturation.</text>
</comment>
<comment type="subcellular location">
    <subcellularLocation>
        <location evidence="1">Cytoplasm</location>
    </subcellularLocation>
    <text evidence="1">Associates with late stage pre-50S ribosomal subunits.</text>
</comment>
<comment type="similarity">
    <text evidence="1">Belongs to the DarP family.</text>
</comment>
<comment type="sequence caution" evidence="2">
    <conflict type="erroneous initiation">
        <sequence resource="EMBL-CDS" id="AAM83766"/>
    </conflict>
    <text>Extended N-terminus.</text>
</comment>
<gene>
    <name evidence="1" type="primary">darP</name>
    <name type="ordered locus">YPO3691</name>
    <name type="ordered locus">y0172</name>
    <name type="ordered locus">YP_3853</name>
</gene>
<keyword id="KW-0963">Cytoplasm</keyword>
<keyword id="KW-1185">Reference proteome</keyword>
<keyword id="KW-0690">Ribosome biogenesis</keyword>
<keyword id="KW-0694">RNA-binding</keyword>
<keyword id="KW-0699">rRNA-binding</keyword>
<dbReference type="EMBL" id="AL590842">
    <property type="protein sequence ID" value="CAL22278.1"/>
    <property type="molecule type" value="Genomic_DNA"/>
</dbReference>
<dbReference type="EMBL" id="AE009952">
    <property type="protein sequence ID" value="AAM83766.1"/>
    <property type="status" value="ALT_INIT"/>
    <property type="molecule type" value="Genomic_DNA"/>
</dbReference>
<dbReference type="EMBL" id="AE017042">
    <property type="protein sequence ID" value="AAS63999.2"/>
    <property type="molecule type" value="Genomic_DNA"/>
</dbReference>
<dbReference type="PIR" id="AC0449">
    <property type="entry name" value="AC0449"/>
</dbReference>
<dbReference type="RefSeq" id="YP_002348573.1">
    <property type="nucleotide sequence ID" value="NC_003143.1"/>
</dbReference>
<dbReference type="SMR" id="Q8ZAU5"/>
<dbReference type="STRING" id="214092.YPO3691"/>
<dbReference type="PaxDb" id="214092-YPO3691"/>
<dbReference type="DNASU" id="1145119"/>
<dbReference type="EnsemblBacteria" id="AAS63999">
    <property type="protein sequence ID" value="AAS63999"/>
    <property type="gene ID" value="YP_3853"/>
</dbReference>
<dbReference type="KEGG" id="ype:YPO3691"/>
<dbReference type="KEGG" id="ypk:y0172"/>
<dbReference type="KEGG" id="ypm:YP_3853"/>
<dbReference type="PATRIC" id="fig|214092.21.peg.4199"/>
<dbReference type="eggNOG" id="COG3028">
    <property type="taxonomic scope" value="Bacteria"/>
</dbReference>
<dbReference type="HOGENOM" id="CLU_106757_2_0_6"/>
<dbReference type="OMA" id="QMQFVGK"/>
<dbReference type="OrthoDB" id="5293604at2"/>
<dbReference type="Proteomes" id="UP000000815">
    <property type="component" value="Chromosome"/>
</dbReference>
<dbReference type="Proteomes" id="UP000001019">
    <property type="component" value="Chromosome"/>
</dbReference>
<dbReference type="Proteomes" id="UP000002490">
    <property type="component" value="Chromosome"/>
</dbReference>
<dbReference type="GO" id="GO:0005829">
    <property type="term" value="C:cytosol"/>
    <property type="evidence" value="ECO:0000318"/>
    <property type="project" value="GO_Central"/>
</dbReference>
<dbReference type="GO" id="GO:0043022">
    <property type="term" value="F:ribosome binding"/>
    <property type="evidence" value="ECO:0007669"/>
    <property type="project" value="UniProtKB-UniRule"/>
</dbReference>
<dbReference type="GO" id="GO:0019843">
    <property type="term" value="F:rRNA binding"/>
    <property type="evidence" value="ECO:0007669"/>
    <property type="project" value="UniProtKB-UniRule"/>
</dbReference>
<dbReference type="GO" id="GO:1902626">
    <property type="term" value="P:assembly of large subunit precursor of preribosome"/>
    <property type="evidence" value="ECO:0007669"/>
    <property type="project" value="UniProtKB-UniRule"/>
</dbReference>
<dbReference type="CDD" id="cd16331">
    <property type="entry name" value="YjgA-like"/>
    <property type="match status" value="1"/>
</dbReference>
<dbReference type="FunFam" id="1.10.60.30:FF:000001">
    <property type="entry name" value="UPF0307 protein YjgA"/>
    <property type="match status" value="1"/>
</dbReference>
<dbReference type="FunFam" id="1.10.60.30:FF:000002">
    <property type="entry name" value="UPF0307 protein YjgA"/>
    <property type="match status" value="1"/>
</dbReference>
<dbReference type="Gene3D" id="1.10.60.30">
    <property type="entry name" value="PSPTO4464-like domains"/>
    <property type="match status" value="2"/>
</dbReference>
<dbReference type="HAMAP" id="MF_00765">
    <property type="entry name" value="DarP"/>
    <property type="match status" value="1"/>
</dbReference>
<dbReference type="InterPro" id="IPR006839">
    <property type="entry name" value="DarP"/>
</dbReference>
<dbReference type="InterPro" id="IPR023153">
    <property type="entry name" value="DarP_sf"/>
</dbReference>
<dbReference type="NCBIfam" id="NF003593">
    <property type="entry name" value="PRK05255.1-1"/>
    <property type="match status" value="1"/>
</dbReference>
<dbReference type="PANTHER" id="PTHR38101">
    <property type="entry name" value="UPF0307 PROTEIN YJGA"/>
    <property type="match status" value="1"/>
</dbReference>
<dbReference type="PANTHER" id="PTHR38101:SF1">
    <property type="entry name" value="UPF0307 PROTEIN YJGA"/>
    <property type="match status" value="1"/>
</dbReference>
<dbReference type="Pfam" id="PF04751">
    <property type="entry name" value="DarP"/>
    <property type="match status" value="1"/>
</dbReference>
<dbReference type="PIRSF" id="PIRSF016183">
    <property type="entry name" value="UCP016183"/>
    <property type="match status" value="1"/>
</dbReference>
<dbReference type="SUPFAM" id="SSF158710">
    <property type="entry name" value="PSPTO4464-like"/>
    <property type="match status" value="1"/>
</dbReference>
<feature type="chain" id="PRO_0000208239" description="Dual-action ribosomal maturation protein DarP">
    <location>
        <begin position="1"/>
        <end position="182"/>
    </location>
</feature>
<reference key="1">
    <citation type="journal article" date="2001" name="Nature">
        <title>Genome sequence of Yersinia pestis, the causative agent of plague.</title>
        <authorList>
            <person name="Parkhill J."/>
            <person name="Wren B.W."/>
            <person name="Thomson N.R."/>
            <person name="Titball R.W."/>
            <person name="Holden M.T.G."/>
            <person name="Prentice M.B."/>
            <person name="Sebaihia M."/>
            <person name="James K.D."/>
            <person name="Churcher C.M."/>
            <person name="Mungall K.L."/>
            <person name="Baker S."/>
            <person name="Basham D."/>
            <person name="Bentley S.D."/>
            <person name="Brooks K."/>
            <person name="Cerdeno-Tarraga A.-M."/>
            <person name="Chillingworth T."/>
            <person name="Cronin A."/>
            <person name="Davies R.M."/>
            <person name="Davis P."/>
            <person name="Dougan G."/>
            <person name="Feltwell T."/>
            <person name="Hamlin N."/>
            <person name="Holroyd S."/>
            <person name="Jagels K."/>
            <person name="Karlyshev A.V."/>
            <person name="Leather S."/>
            <person name="Moule S."/>
            <person name="Oyston P.C.F."/>
            <person name="Quail M.A."/>
            <person name="Rutherford K.M."/>
            <person name="Simmonds M."/>
            <person name="Skelton J."/>
            <person name="Stevens K."/>
            <person name="Whitehead S."/>
            <person name="Barrell B.G."/>
        </authorList>
    </citation>
    <scope>NUCLEOTIDE SEQUENCE [LARGE SCALE GENOMIC DNA]</scope>
    <source>
        <strain>CO-92 / Biovar Orientalis</strain>
    </source>
</reference>
<reference key="2">
    <citation type="journal article" date="2002" name="J. Bacteriol.">
        <title>Genome sequence of Yersinia pestis KIM.</title>
        <authorList>
            <person name="Deng W."/>
            <person name="Burland V."/>
            <person name="Plunkett G. III"/>
            <person name="Boutin A."/>
            <person name="Mayhew G.F."/>
            <person name="Liss P."/>
            <person name="Perna N.T."/>
            <person name="Rose D.J."/>
            <person name="Mau B."/>
            <person name="Zhou S."/>
            <person name="Schwartz D.C."/>
            <person name="Fetherston J.D."/>
            <person name="Lindler L.E."/>
            <person name="Brubaker R.R."/>
            <person name="Plano G.V."/>
            <person name="Straley S.C."/>
            <person name="McDonough K.A."/>
            <person name="Nilles M.L."/>
            <person name="Matson J.S."/>
            <person name="Blattner F.R."/>
            <person name="Perry R.D."/>
        </authorList>
    </citation>
    <scope>NUCLEOTIDE SEQUENCE [LARGE SCALE GENOMIC DNA]</scope>
    <source>
        <strain>KIM10+ / Biovar Mediaevalis</strain>
    </source>
</reference>
<reference key="3">
    <citation type="journal article" date="2004" name="DNA Res.">
        <title>Complete genome sequence of Yersinia pestis strain 91001, an isolate avirulent to humans.</title>
        <authorList>
            <person name="Song Y."/>
            <person name="Tong Z."/>
            <person name="Wang J."/>
            <person name="Wang L."/>
            <person name="Guo Z."/>
            <person name="Han Y."/>
            <person name="Zhang J."/>
            <person name="Pei D."/>
            <person name="Zhou D."/>
            <person name="Qin H."/>
            <person name="Pang X."/>
            <person name="Han Y."/>
            <person name="Zhai J."/>
            <person name="Li M."/>
            <person name="Cui B."/>
            <person name="Qi Z."/>
            <person name="Jin L."/>
            <person name="Dai R."/>
            <person name="Chen F."/>
            <person name="Li S."/>
            <person name="Ye C."/>
            <person name="Du Z."/>
            <person name="Lin W."/>
            <person name="Wang J."/>
            <person name="Yu J."/>
            <person name="Yang H."/>
            <person name="Wang J."/>
            <person name="Huang P."/>
            <person name="Yang R."/>
        </authorList>
    </citation>
    <scope>NUCLEOTIDE SEQUENCE [LARGE SCALE GENOMIC DNA]</scope>
    <source>
        <strain>91001 / Biovar Mediaevalis</strain>
    </source>
</reference>
<reference key="4">
    <citation type="submission" date="2016-05" db="EMBL/GenBank/DDBJ databases">
        <title>Reannotation of Yersinia pestis strain 91001 based on omics data.</title>
        <authorList>
            <person name="Yiqing M."/>
        </authorList>
    </citation>
    <scope>SEQUENCE REVISION TO N-TERMINUS</scope>
    <source>
        <strain>91001 / Biovar Mediaevalis</strain>
    </source>
</reference>
<evidence type="ECO:0000255" key="1">
    <source>
        <dbReference type="HAMAP-Rule" id="MF_00765"/>
    </source>
</evidence>
<evidence type="ECO:0000305" key="2"/>